<sequence>MKVFDYEDVQLIPNKCIVNSRSECDTTVILGKHAFKMPIVPANMQTIINESIAEFLAENGYFYIMHRFNGSARIPFVKKMKERQLISSISVGVKKEECLFVEELAKQGLTPDYITIDIAHGHSNSVIEMIQRIKTRLPETFVIAGNVGTPEAVRELENAGADATKVGIGPGKVCITKIKTGFGTGGWQLAALRWCAKAARKPIIADGGIRTHGDIAKSIRFGATMVMIGSLFAGHEESSGETKIENGIAYKEYFGSASEFQKGEKKNIEGKKIWIQHKGSLKNTLIEMHQDLQSSISYAGGRDLEAIRKVDYVIVKNSIFNGDTI</sequence>
<protein>
    <recommendedName>
        <fullName evidence="1">GMP reductase</fullName>
        <ecNumber evidence="1">1.7.1.7</ecNumber>
    </recommendedName>
    <alternativeName>
        <fullName evidence="1">Guanosine 5'-monophosphate oxidoreductase</fullName>
        <shortName evidence="1">Guanosine monophosphate reductase</shortName>
    </alternativeName>
</protein>
<organism>
    <name type="scientific">Helicobacter pylori (strain J99 / ATCC 700824)</name>
    <name type="common">Campylobacter pylori J99</name>
    <dbReference type="NCBI Taxonomy" id="85963"/>
    <lineage>
        <taxon>Bacteria</taxon>
        <taxon>Pseudomonadati</taxon>
        <taxon>Campylobacterota</taxon>
        <taxon>Epsilonproteobacteria</taxon>
        <taxon>Campylobacterales</taxon>
        <taxon>Helicobacteraceae</taxon>
        <taxon>Helicobacter</taxon>
    </lineage>
</organism>
<feature type="chain" id="PRO_0000093757" description="GMP reductase">
    <location>
        <begin position="1"/>
        <end position="325"/>
    </location>
</feature>
<feature type="active site" description="Thioimidate intermediate" evidence="1">
    <location>
        <position position="174"/>
    </location>
</feature>
<feature type="binding site" evidence="1">
    <location>
        <begin position="203"/>
        <end position="226"/>
    </location>
    <ligand>
        <name>NADP(+)</name>
        <dbReference type="ChEBI" id="CHEBI:58349"/>
    </ligand>
</feature>
<dbReference type="EC" id="1.7.1.7" evidence="1"/>
<dbReference type="EMBL" id="AE001439">
    <property type="protein sequence ID" value="AAD06382.1"/>
    <property type="molecule type" value="Genomic_DNA"/>
</dbReference>
<dbReference type="PIR" id="A71887">
    <property type="entry name" value="A71887"/>
</dbReference>
<dbReference type="RefSeq" id="WP_000862247.1">
    <property type="nucleotide sequence ID" value="NC_000921.1"/>
</dbReference>
<dbReference type="SMR" id="Q9ZKZ2"/>
<dbReference type="KEGG" id="hpj:jhp_0790"/>
<dbReference type="PATRIC" id="fig|85963.30.peg.182"/>
<dbReference type="eggNOG" id="COG0516">
    <property type="taxonomic scope" value="Bacteria"/>
</dbReference>
<dbReference type="Proteomes" id="UP000000804">
    <property type="component" value="Chromosome"/>
</dbReference>
<dbReference type="GO" id="GO:0005829">
    <property type="term" value="C:cytosol"/>
    <property type="evidence" value="ECO:0007669"/>
    <property type="project" value="TreeGrafter"/>
</dbReference>
<dbReference type="GO" id="GO:1902560">
    <property type="term" value="C:GMP reductase complex"/>
    <property type="evidence" value="ECO:0007669"/>
    <property type="project" value="InterPro"/>
</dbReference>
<dbReference type="GO" id="GO:0003920">
    <property type="term" value="F:GMP reductase activity"/>
    <property type="evidence" value="ECO:0007669"/>
    <property type="project" value="UniProtKB-UniRule"/>
</dbReference>
<dbReference type="GO" id="GO:0006163">
    <property type="term" value="P:purine nucleotide metabolic process"/>
    <property type="evidence" value="ECO:0007669"/>
    <property type="project" value="UniProtKB-UniRule"/>
</dbReference>
<dbReference type="CDD" id="cd00381">
    <property type="entry name" value="IMPDH"/>
    <property type="match status" value="1"/>
</dbReference>
<dbReference type="FunFam" id="3.20.20.70:FF:000079">
    <property type="entry name" value="GMP reductase"/>
    <property type="match status" value="1"/>
</dbReference>
<dbReference type="Gene3D" id="3.20.20.70">
    <property type="entry name" value="Aldolase class I"/>
    <property type="match status" value="1"/>
</dbReference>
<dbReference type="HAMAP" id="MF_01511">
    <property type="entry name" value="GMP_reduct_type2"/>
    <property type="match status" value="1"/>
</dbReference>
<dbReference type="InterPro" id="IPR013785">
    <property type="entry name" value="Aldolase_TIM"/>
</dbReference>
<dbReference type="InterPro" id="IPR050139">
    <property type="entry name" value="GMP_reductase"/>
</dbReference>
<dbReference type="InterPro" id="IPR005994">
    <property type="entry name" value="GuaC_type_2"/>
</dbReference>
<dbReference type="InterPro" id="IPR015875">
    <property type="entry name" value="IMP_DH/GMP_Rdtase_CS"/>
</dbReference>
<dbReference type="InterPro" id="IPR001093">
    <property type="entry name" value="IMP_DH_GMPRt"/>
</dbReference>
<dbReference type="NCBIfam" id="TIGR01306">
    <property type="entry name" value="GMP_reduct_2"/>
    <property type="match status" value="1"/>
</dbReference>
<dbReference type="NCBIfam" id="NF003966">
    <property type="entry name" value="PRK05458.1"/>
    <property type="match status" value="1"/>
</dbReference>
<dbReference type="PANTHER" id="PTHR43170">
    <property type="entry name" value="GMP REDUCTASE"/>
    <property type="match status" value="1"/>
</dbReference>
<dbReference type="PANTHER" id="PTHR43170:SF5">
    <property type="entry name" value="GMP REDUCTASE"/>
    <property type="match status" value="1"/>
</dbReference>
<dbReference type="Pfam" id="PF00478">
    <property type="entry name" value="IMPDH"/>
    <property type="match status" value="1"/>
</dbReference>
<dbReference type="PIRSF" id="PIRSF036500">
    <property type="entry name" value="GMP_red_Firmic"/>
    <property type="match status" value="1"/>
</dbReference>
<dbReference type="SMART" id="SM01240">
    <property type="entry name" value="IMPDH"/>
    <property type="match status" value="1"/>
</dbReference>
<dbReference type="SUPFAM" id="SSF51412">
    <property type="entry name" value="Inosine monophosphate dehydrogenase (IMPDH)"/>
    <property type="match status" value="1"/>
</dbReference>
<dbReference type="PROSITE" id="PS00487">
    <property type="entry name" value="IMP_DH_GMP_RED"/>
    <property type="match status" value="1"/>
</dbReference>
<keyword id="KW-0521">NADP</keyword>
<keyword id="KW-0560">Oxidoreductase</keyword>
<proteinExistence type="inferred from homology"/>
<name>GUAC_HELPJ</name>
<evidence type="ECO:0000255" key="1">
    <source>
        <dbReference type="HAMAP-Rule" id="MF_01511"/>
    </source>
</evidence>
<reference key="1">
    <citation type="journal article" date="1999" name="Nature">
        <title>Genomic sequence comparison of two unrelated isolates of the human gastric pathogen Helicobacter pylori.</title>
        <authorList>
            <person name="Alm R.A."/>
            <person name="Ling L.-S.L."/>
            <person name="Moir D.T."/>
            <person name="King B.L."/>
            <person name="Brown E.D."/>
            <person name="Doig P.C."/>
            <person name="Smith D.R."/>
            <person name="Noonan B."/>
            <person name="Guild B.C."/>
            <person name="deJonge B.L."/>
            <person name="Carmel G."/>
            <person name="Tummino P.J."/>
            <person name="Caruso A."/>
            <person name="Uria-Nickelsen M."/>
            <person name="Mills D.M."/>
            <person name="Ives C."/>
            <person name="Gibson R."/>
            <person name="Merberg D."/>
            <person name="Mills S.D."/>
            <person name="Jiang Q."/>
            <person name="Taylor D.E."/>
            <person name="Vovis G.F."/>
            <person name="Trust T.J."/>
        </authorList>
    </citation>
    <scope>NUCLEOTIDE SEQUENCE [LARGE SCALE GENOMIC DNA]</scope>
    <source>
        <strain>J99 / ATCC 700824</strain>
    </source>
</reference>
<comment type="function">
    <text evidence="1">Catalyzes the irreversible NADPH-dependent deamination of GMP to IMP. It functions in the conversion of nucleobase, nucleoside and nucleotide derivatives of G to A nucleotides, and in maintaining the intracellular balance of A and G nucleotides.</text>
</comment>
<comment type="catalytic activity">
    <reaction evidence="1">
        <text>IMP + NH4(+) + NADP(+) = GMP + NADPH + 2 H(+)</text>
        <dbReference type="Rhea" id="RHEA:17185"/>
        <dbReference type="ChEBI" id="CHEBI:15378"/>
        <dbReference type="ChEBI" id="CHEBI:28938"/>
        <dbReference type="ChEBI" id="CHEBI:57783"/>
        <dbReference type="ChEBI" id="CHEBI:58053"/>
        <dbReference type="ChEBI" id="CHEBI:58115"/>
        <dbReference type="ChEBI" id="CHEBI:58349"/>
        <dbReference type="EC" id="1.7.1.7"/>
    </reaction>
</comment>
<comment type="similarity">
    <text evidence="1">Belongs to the IMPDH/GMPR family. GuaC type 2 subfamily.</text>
</comment>
<accession>Q9ZKZ2</accession>
<gene>
    <name evidence="1" type="primary">guaC</name>
    <name type="ordered locus">jhp_0790</name>
</gene>